<proteinExistence type="evidence at protein level"/>
<name>YOEB_BACSU</name>
<reference key="1">
    <citation type="journal article" date="1997" name="Nature">
        <title>The complete genome sequence of the Gram-positive bacterium Bacillus subtilis.</title>
        <authorList>
            <person name="Kunst F."/>
            <person name="Ogasawara N."/>
            <person name="Moszer I."/>
            <person name="Albertini A.M."/>
            <person name="Alloni G."/>
            <person name="Azevedo V."/>
            <person name="Bertero M.G."/>
            <person name="Bessieres P."/>
            <person name="Bolotin A."/>
            <person name="Borchert S."/>
            <person name="Borriss R."/>
            <person name="Boursier L."/>
            <person name="Brans A."/>
            <person name="Braun M."/>
            <person name="Brignell S.C."/>
            <person name="Bron S."/>
            <person name="Brouillet S."/>
            <person name="Bruschi C.V."/>
            <person name="Caldwell B."/>
            <person name="Capuano V."/>
            <person name="Carter N.M."/>
            <person name="Choi S.-K."/>
            <person name="Codani J.-J."/>
            <person name="Connerton I.F."/>
            <person name="Cummings N.J."/>
            <person name="Daniel R.A."/>
            <person name="Denizot F."/>
            <person name="Devine K.M."/>
            <person name="Duesterhoeft A."/>
            <person name="Ehrlich S.D."/>
            <person name="Emmerson P.T."/>
            <person name="Entian K.-D."/>
            <person name="Errington J."/>
            <person name="Fabret C."/>
            <person name="Ferrari E."/>
            <person name="Foulger D."/>
            <person name="Fritz C."/>
            <person name="Fujita M."/>
            <person name="Fujita Y."/>
            <person name="Fuma S."/>
            <person name="Galizzi A."/>
            <person name="Galleron N."/>
            <person name="Ghim S.-Y."/>
            <person name="Glaser P."/>
            <person name="Goffeau A."/>
            <person name="Golightly E.J."/>
            <person name="Grandi G."/>
            <person name="Guiseppi G."/>
            <person name="Guy B.J."/>
            <person name="Haga K."/>
            <person name="Haiech J."/>
            <person name="Harwood C.R."/>
            <person name="Henaut A."/>
            <person name="Hilbert H."/>
            <person name="Holsappel S."/>
            <person name="Hosono S."/>
            <person name="Hullo M.-F."/>
            <person name="Itaya M."/>
            <person name="Jones L.-M."/>
            <person name="Joris B."/>
            <person name="Karamata D."/>
            <person name="Kasahara Y."/>
            <person name="Klaerr-Blanchard M."/>
            <person name="Klein C."/>
            <person name="Kobayashi Y."/>
            <person name="Koetter P."/>
            <person name="Koningstein G."/>
            <person name="Krogh S."/>
            <person name="Kumano M."/>
            <person name="Kurita K."/>
            <person name="Lapidus A."/>
            <person name="Lardinois S."/>
            <person name="Lauber J."/>
            <person name="Lazarevic V."/>
            <person name="Lee S.-M."/>
            <person name="Levine A."/>
            <person name="Liu H."/>
            <person name="Masuda S."/>
            <person name="Mauel C."/>
            <person name="Medigue C."/>
            <person name="Medina N."/>
            <person name="Mellado R.P."/>
            <person name="Mizuno M."/>
            <person name="Moestl D."/>
            <person name="Nakai S."/>
            <person name="Noback M."/>
            <person name="Noone D."/>
            <person name="O'Reilly M."/>
            <person name="Ogawa K."/>
            <person name="Ogiwara A."/>
            <person name="Oudega B."/>
            <person name="Park S.-H."/>
            <person name="Parro V."/>
            <person name="Pohl T.M."/>
            <person name="Portetelle D."/>
            <person name="Porwollik S."/>
            <person name="Prescott A.M."/>
            <person name="Presecan E."/>
            <person name="Pujic P."/>
            <person name="Purnelle B."/>
            <person name="Rapoport G."/>
            <person name="Rey M."/>
            <person name="Reynolds S."/>
            <person name="Rieger M."/>
            <person name="Rivolta C."/>
            <person name="Rocha E."/>
            <person name="Roche B."/>
            <person name="Rose M."/>
            <person name="Sadaie Y."/>
            <person name="Sato T."/>
            <person name="Scanlan E."/>
            <person name="Schleich S."/>
            <person name="Schroeter R."/>
            <person name="Scoffone F."/>
            <person name="Sekiguchi J."/>
            <person name="Sekowska A."/>
            <person name="Seror S.J."/>
            <person name="Serror P."/>
            <person name="Shin B.-S."/>
            <person name="Soldo B."/>
            <person name="Sorokin A."/>
            <person name="Tacconi E."/>
            <person name="Takagi T."/>
            <person name="Takahashi H."/>
            <person name="Takemaru K."/>
            <person name="Takeuchi M."/>
            <person name="Tamakoshi A."/>
            <person name="Tanaka T."/>
            <person name="Terpstra P."/>
            <person name="Tognoni A."/>
            <person name="Tosato V."/>
            <person name="Uchiyama S."/>
            <person name="Vandenbol M."/>
            <person name="Vannier F."/>
            <person name="Vassarotti A."/>
            <person name="Viari A."/>
            <person name="Wambutt R."/>
            <person name="Wedler E."/>
            <person name="Wedler H."/>
            <person name="Weitzenegger T."/>
            <person name="Winters P."/>
            <person name="Wipat A."/>
            <person name="Yamamoto H."/>
            <person name="Yamane K."/>
            <person name="Yasumoto K."/>
            <person name="Yata K."/>
            <person name="Yoshida K."/>
            <person name="Yoshikawa H.-F."/>
            <person name="Zumstein E."/>
            <person name="Yoshikawa H."/>
            <person name="Danchin A."/>
        </authorList>
    </citation>
    <scope>NUCLEOTIDE SEQUENCE [LARGE SCALE GENOMIC DNA]</scope>
    <source>
        <strain>168</strain>
    </source>
</reference>
<reference key="2">
    <citation type="journal article" date="2009" name="Microbiology">
        <title>From a consortium sequence to a unified sequence: the Bacillus subtilis 168 reference genome a decade later.</title>
        <authorList>
            <person name="Barbe V."/>
            <person name="Cruveiller S."/>
            <person name="Kunst F."/>
            <person name="Lenoble P."/>
            <person name="Meurice G."/>
            <person name="Sekowska A."/>
            <person name="Vallenet D."/>
            <person name="Wang T."/>
            <person name="Moszer I."/>
            <person name="Medigue C."/>
            <person name="Danchin A."/>
        </authorList>
    </citation>
    <scope>SEQUENCE REVISION TO 53</scope>
</reference>
<reference key="3">
    <citation type="journal article" date="2007" name="Mol. Microbiol.">
        <title>The essential YycFG two-component system controls cell wall metabolism in Bacillus subtilis.</title>
        <authorList>
            <person name="Bisicchia P."/>
            <person name="Noone D."/>
            <person name="Lioliou E."/>
            <person name="Howell A."/>
            <person name="Quigley S."/>
            <person name="Jensen T."/>
            <person name="Jarmer H."/>
            <person name="Devine K.M."/>
        </authorList>
    </citation>
    <scope>REPRESSION BY YYCFG</scope>
</reference>
<organism>
    <name type="scientific">Bacillus subtilis (strain 168)</name>
    <dbReference type="NCBI Taxonomy" id="224308"/>
    <lineage>
        <taxon>Bacteria</taxon>
        <taxon>Bacillati</taxon>
        <taxon>Bacillota</taxon>
        <taxon>Bacilli</taxon>
        <taxon>Bacillales</taxon>
        <taxon>Bacillaceae</taxon>
        <taxon>Bacillus</taxon>
    </lineage>
</organism>
<comment type="induction">
    <text evidence="2">Negatively regulated by the two-component system YycFG.</text>
</comment>
<keyword id="KW-0002">3D-structure</keyword>
<keyword id="KW-1185">Reference proteome</keyword>
<keyword id="KW-0732">Signal</keyword>
<evidence type="ECO:0000255" key="1"/>
<evidence type="ECO:0000269" key="2">
    <source>
    </source>
</evidence>
<evidence type="ECO:0007829" key="3">
    <source>
        <dbReference type="PDB" id="8I2F"/>
    </source>
</evidence>
<evidence type="ECO:0007829" key="4">
    <source>
        <dbReference type="PDB" id="8WT4"/>
    </source>
</evidence>
<gene>
    <name type="primary">yoeB</name>
    <name type="ordered locus">BSU18380</name>
</gene>
<sequence>MKKCLLFLTTIALILSLSTNAFAKNTSGDLSQKQALQLALSAREHFWNTMSGHNPKVKKAVCPSGTFEYQNLQYVYMCSDLGTKAKAVNYLTPIFTKTAIEKGFKDYHFTVSKGKLAVPIGDGDNLLNWKKSTAKLISKKGSTITYEFTVPTLDGSPSAKRKVTFVKENKKWKVNQFDAVI</sequence>
<dbReference type="EMBL" id="AL009126">
    <property type="protein sequence ID" value="CAB13721.2"/>
    <property type="molecule type" value="Genomic_DNA"/>
</dbReference>
<dbReference type="PIR" id="B69905">
    <property type="entry name" value="B69905"/>
</dbReference>
<dbReference type="PDB" id="2RSX">
    <property type="method" value="NMR"/>
    <property type="chains" value="A=24-181"/>
</dbReference>
<dbReference type="PDB" id="8I2E">
    <property type="method" value="X-ray"/>
    <property type="resolution" value="3.20 A"/>
    <property type="chains" value="A/C=24-181"/>
</dbReference>
<dbReference type="PDB" id="8I2F">
    <property type="method" value="X-ray"/>
    <property type="resolution" value="2.03 A"/>
    <property type="chains" value="A/C=24-181"/>
</dbReference>
<dbReference type="PDB" id="8WT4">
    <property type="method" value="X-ray"/>
    <property type="resolution" value="1.62 A"/>
    <property type="chains" value="A=1-181"/>
</dbReference>
<dbReference type="PDBsum" id="2RSX"/>
<dbReference type="PDBsum" id="8I2E"/>
<dbReference type="PDBsum" id="8I2F"/>
<dbReference type="PDBsum" id="8WT4"/>
<dbReference type="BMRB" id="O34841"/>
<dbReference type="SMR" id="O34841"/>
<dbReference type="FunCoup" id="O34841">
    <property type="interactions" value="30"/>
</dbReference>
<dbReference type="STRING" id="224308.BSU18380"/>
<dbReference type="MEROPS" id="I80.001"/>
<dbReference type="PaxDb" id="224308-BSU18380"/>
<dbReference type="EnsemblBacteria" id="CAB13721">
    <property type="protein sequence ID" value="CAB13721"/>
    <property type="gene ID" value="BSU_18380"/>
</dbReference>
<dbReference type="GeneID" id="939964"/>
<dbReference type="KEGG" id="bsu:BSU18380"/>
<dbReference type="PATRIC" id="fig|224308.179.peg.2005"/>
<dbReference type="eggNOG" id="ENOG5033587">
    <property type="taxonomic scope" value="Bacteria"/>
</dbReference>
<dbReference type="InParanoid" id="O34841"/>
<dbReference type="OrthoDB" id="2814503at2"/>
<dbReference type="BioCyc" id="BSUB:BSU18380-MONOMER"/>
<dbReference type="EvolutionaryTrace" id="O34841"/>
<dbReference type="Proteomes" id="UP000001570">
    <property type="component" value="Chromosome"/>
</dbReference>
<dbReference type="Gene3D" id="3.10.450.420">
    <property type="match status" value="1"/>
</dbReference>
<dbReference type="InterPro" id="IPR031841">
    <property type="entry name" value="Endopep_inhib"/>
</dbReference>
<dbReference type="InterPro" id="IPR053749">
    <property type="entry name" value="TA_system-associated_sf"/>
</dbReference>
<dbReference type="Pfam" id="PF16800">
    <property type="entry name" value="Endopep_inhib"/>
    <property type="match status" value="1"/>
</dbReference>
<protein>
    <recommendedName>
        <fullName>Uncharacterized protein YoeB</fullName>
    </recommendedName>
</protein>
<feature type="signal peptide" evidence="1">
    <location>
        <begin position="1"/>
        <end position="23"/>
    </location>
</feature>
<feature type="chain" id="PRO_0000013721" description="Uncharacterized protein YoeB">
    <location>
        <begin position="24"/>
        <end position="181"/>
    </location>
</feature>
<feature type="helix" evidence="4">
    <location>
        <begin position="32"/>
        <end position="51"/>
    </location>
</feature>
<feature type="strand" evidence="4">
    <location>
        <begin position="66"/>
        <end position="69"/>
    </location>
</feature>
<feature type="strand" evidence="4">
    <location>
        <begin position="72"/>
        <end position="76"/>
    </location>
</feature>
<feature type="helix" evidence="4">
    <location>
        <begin position="79"/>
        <end position="81"/>
    </location>
</feature>
<feature type="helix" evidence="4">
    <location>
        <begin position="84"/>
        <end position="91"/>
    </location>
</feature>
<feature type="turn" evidence="4">
    <location>
        <begin position="92"/>
        <end position="94"/>
    </location>
</feature>
<feature type="helix" evidence="4">
    <location>
        <begin position="97"/>
        <end position="106"/>
    </location>
</feature>
<feature type="strand" evidence="4">
    <location>
        <begin position="110"/>
        <end position="112"/>
    </location>
</feature>
<feature type="strand" evidence="4">
    <location>
        <begin position="115"/>
        <end position="119"/>
    </location>
</feature>
<feature type="helix" evidence="4">
    <location>
        <begin position="129"/>
        <end position="131"/>
    </location>
</feature>
<feature type="strand" evidence="4">
    <location>
        <begin position="133"/>
        <end position="140"/>
    </location>
</feature>
<feature type="strand" evidence="4">
    <location>
        <begin position="143"/>
        <end position="150"/>
    </location>
</feature>
<feature type="strand" evidence="3">
    <location>
        <begin position="152"/>
        <end position="156"/>
    </location>
</feature>
<feature type="strand" evidence="4">
    <location>
        <begin position="159"/>
        <end position="168"/>
    </location>
</feature>
<feature type="strand" evidence="4">
    <location>
        <begin position="171"/>
        <end position="175"/>
    </location>
</feature>
<accession>O34841</accession>